<feature type="chain" id="PRO_0000143217" description="Maturase K">
    <location>
        <begin position="1"/>
        <end position="503"/>
    </location>
</feature>
<proteinExistence type="inferred from homology"/>
<comment type="function">
    <text evidence="1">Usually encoded in the trnK tRNA gene intron. Probably assists in splicing its own and other chloroplast group II introns.</text>
</comment>
<comment type="subcellular location">
    <subcellularLocation>
        <location>Plastid</location>
        <location>Chloroplast</location>
    </subcellularLocation>
</comment>
<comment type="similarity">
    <text evidence="1">Belongs to the intron maturase 2 family. MatK subfamily.</text>
</comment>
<sequence length="503" mass="60335">MEEFQGYLDLNRSRQHYLLYPLLFREYIYALAHDHGLNRXIGFENAGYDNKSSSIIVKRLITRMYQQNPLIFSAKDSIQNQFFGHNKNLYSQILSEGFAVIVEIPFSLRFLFSLERKXIPKSHNLRSIHSIFPFLEDKFTHLXYVSDVLIPYHIHFEILVQTLRYWVKDASSLHLLRLFLREYWNSLITPKKHITFFFKGNTRLFLFXYNSHICEYEYIFLFLRNQSSHLRSTSSGIFFERIYFYVKIXHFVKXFFDNNFQCILWFFKDPFMHYVXYQGKFFIASKDTPLLMNKWKCYLVNLWQYHFSVWFQPGRIDINQLCKYSFDFLGYRSSVRLNSSVVRSQMLENLFLINNAMKKFETIVPIIPLIGSLYKSNFCNTFGHPISKPTRIDSSDSDIIDRFLRICRNLSHYHSGSSKKKSLYRVKYILRLSCVKTLARKHKRTVRTFVKRLGSEFLEKFLTEEEVVLSLVXPRTYSTSRRLYRGQIWYLDITSINDLXNYE</sequence>
<accession>Q9TKD1</accession>
<gene>
    <name evidence="1" type="primary">matK</name>
</gene>
<dbReference type="EMBL" id="AF184711">
    <property type="protein sequence ID" value="AAF05918.1"/>
    <property type="molecule type" value="Genomic_DNA"/>
</dbReference>
<dbReference type="GO" id="GO:0009507">
    <property type="term" value="C:chloroplast"/>
    <property type="evidence" value="ECO:0007669"/>
    <property type="project" value="UniProtKB-SubCell"/>
</dbReference>
<dbReference type="GO" id="GO:0003723">
    <property type="term" value="F:RNA binding"/>
    <property type="evidence" value="ECO:0007669"/>
    <property type="project" value="UniProtKB-KW"/>
</dbReference>
<dbReference type="GO" id="GO:0006397">
    <property type="term" value="P:mRNA processing"/>
    <property type="evidence" value="ECO:0007669"/>
    <property type="project" value="UniProtKB-KW"/>
</dbReference>
<dbReference type="GO" id="GO:0008380">
    <property type="term" value="P:RNA splicing"/>
    <property type="evidence" value="ECO:0007669"/>
    <property type="project" value="UniProtKB-UniRule"/>
</dbReference>
<dbReference type="GO" id="GO:0008033">
    <property type="term" value="P:tRNA processing"/>
    <property type="evidence" value="ECO:0007669"/>
    <property type="project" value="UniProtKB-KW"/>
</dbReference>
<dbReference type="HAMAP" id="MF_01390">
    <property type="entry name" value="MatK"/>
    <property type="match status" value="1"/>
</dbReference>
<dbReference type="InterPro" id="IPR024937">
    <property type="entry name" value="Domain_X"/>
</dbReference>
<dbReference type="InterPro" id="IPR002866">
    <property type="entry name" value="Maturase_MatK"/>
</dbReference>
<dbReference type="InterPro" id="IPR024942">
    <property type="entry name" value="Maturase_MatK_N"/>
</dbReference>
<dbReference type="PANTHER" id="PTHR34811">
    <property type="entry name" value="MATURASE K"/>
    <property type="match status" value="1"/>
</dbReference>
<dbReference type="PANTHER" id="PTHR34811:SF1">
    <property type="entry name" value="MATURASE K"/>
    <property type="match status" value="1"/>
</dbReference>
<dbReference type="Pfam" id="PF01348">
    <property type="entry name" value="Intron_maturas2"/>
    <property type="match status" value="1"/>
</dbReference>
<dbReference type="Pfam" id="PF01824">
    <property type="entry name" value="MatK_N"/>
    <property type="match status" value="1"/>
</dbReference>
<organism>
    <name type="scientific">Agonis flexuosa</name>
    <name type="common">Australian willow myrtle</name>
    <name type="synonym">Metrosideros flexuosa</name>
    <dbReference type="NCBI Taxonomy" id="106026"/>
    <lineage>
        <taxon>Eukaryota</taxon>
        <taxon>Viridiplantae</taxon>
        <taxon>Streptophyta</taxon>
        <taxon>Embryophyta</taxon>
        <taxon>Tracheophyta</taxon>
        <taxon>Spermatophyta</taxon>
        <taxon>Magnoliopsida</taxon>
        <taxon>eudicotyledons</taxon>
        <taxon>Gunneridae</taxon>
        <taxon>Pentapetalae</taxon>
        <taxon>rosids</taxon>
        <taxon>malvids</taxon>
        <taxon>Myrtales</taxon>
        <taxon>Myrtaceae</taxon>
        <taxon>Myrtoideae</taxon>
        <taxon>Leptospermeae</taxon>
        <taxon>Agonis</taxon>
    </lineage>
</organism>
<protein>
    <recommendedName>
        <fullName evidence="1">Maturase K</fullName>
    </recommendedName>
    <alternativeName>
        <fullName evidence="1">Intron maturase</fullName>
    </alternativeName>
</protein>
<geneLocation type="chloroplast"/>
<evidence type="ECO:0000255" key="1">
    <source>
        <dbReference type="HAMAP-Rule" id="MF_01390"/>
    </source>
</evidence>
<name>MATK_AGOFL</name>
<keyword id="KW-0150">Chloroplast</keyword>
<keyword id="KW-0507">mRNA processing</keyword>
<keyword id="KW-0934">Plastid</keyword>
<keyword id="KW-0694">RNA-binding</keyword>
<keyword id="KW-0819">tRNA processing</keyword>
<reference key="1">
    <citation type="journal article" date="2005" name="Plant Syst. Evol.">
        <title>Relationships within Myrtaceae sensu lato based on a matK phylogeny.</title>
        <authorList>
            <person name="Wilson P.G."/>
            <person name="O'Brien M.M."/>
            <person name="Heslewood M.M."/>
            <person name="Quinn C.J."/>
        </authorList>
    </citation>
    <scope>NUCLEOTIDE SEQUENCE [GENOMIC DNA]</scope>
</reference>